<evidence type="ECO:0000255" key="1">
    <source>
        <dbReference type="HAMAP-Rule" id="MF_01197"/>
    </source>
</evidence>
<evidence type="ECO:0000256" key="2">
    <source>
        <dbReference type="SAM" id="MobiDB-lite"/>
    </source>
</evidence>
<keyword id="KW-0131">Cell cycle</keyword>
<keyword id="KW-0132">Cell division</keyword>
<keyword id="KW-0963">Cytoplasm</keyword>
<keyword id="KW-0717">Septation</keyword>
<protein>
    <recommendedName>
        <fullName evidence="1">Cell division protein SepF</fullName>
    </recommendedName>
</protein>
<sequence>MSLISRLRAVVAGDDFLDSDFDELEYDSSDDFENFNRGNKEGSTEMATISQANPFDGRSGFPPSNVIGMPGISTNDSEVSLMEPRSFDEMPRVIQALRERKTVILNLTMMEPDQAQRAVDFVAGGTFAIDGHQERVGESIFLFAPSCVTVTNSFQEEASPSNMSNKGNDLISKETSPAPEPAWGETVATAL</sequence>
<comment type="function">
    <text evidence="1">Cell division protein that is part of the divisome complex and is recruited early to the Z-ring. Probably stimulates Z-ring formation, perhaps through the cross-linking of FtsZ protofilaments. Its function overlaps with FtsA.</text>
</comment>
<comment type="subunit">
    <text evidence="1">Homodimer. Interacts with FtsZ.</text>
</comment>
<comment type="subcellular location">
    <subcellularLocation>
        <location evidence="1">Cytoplasm</location>
    </subcellularLocation>
    <text evidence="1">Localizes to the division site, in a FtsZ-dependent manner.</text>
</comment>
<comment type="similarity">
    <text evidence="1">Belongs to the SepF family.</text>
</comment>
<accession>A2C0K1</accession>
<gene>
    <name evidence="1" type="primary">sepF</name>
    <name type="ordered locus">NATL1_04471</name>
</gene>
<feature type="chain" id="PRO_0000334064" description="Cell division protein SepF">
    <location>
        <begin position="1"/>
        <end position="191"/>
    </location>
</feature>
<feature type="region of interest" description="Disordered" evidence="2">
    <location>
        <begin position="156"/>
        <end position="191"/>
    </location>
</feature>
<feature type="compositionally biased region" description="Polar residues" evidence="2">
    <location>
        <begin position="156"/>
        <end position="167"/>
    </location>
</feature>
<dbReference type="EMBL" id="CP000553">
    <property type="protein sequence ID" value="ABM75011.1"/>
    <property type="molecule type" value="Genomic_DNA"/>
</dbReference>
<dbReference type="RefSeq" id="WP_011823198.1">
    <property type="nucleotide sequence ID" value="NC_008819.1"/>
</dbReference>
<dbReference type="SMR" id="A2C0K1"/>
<dbReference type="KEGG" id="pme:NATL1_04471"/>
<dbReference type="eggNOG" id="COG1799">
    <property type="taxonomic scope" value="Bacteria"/>
</dbReference>
<dbReference type="HOGENOM" id="CLU_078499_1_0_3"/>
<dbReference type="Proteomes" id="UP000002592">
    <property type="component" value="Chromosome"/>
</dbReference>
<dbReference type="GO" id="GO:0005737">
    <property type="term" value="C:cytoplasm"/>
    <property type="evidence" value="ECO:0007669"/>
    <property type="project" value="UniProtKB-SubCell"/>
</dbReference>
<dbReference type="GO" id="GO:0000917">
    <property type="term" value="P:division septum assembly"/>
    <property type="evidence" value="ECO:0007669"/>
    <property type="project" value="UniProtKB-KW"/>
</dbReference>
<dbReference type="GO" id="GO:0043093">
    <property type="term" value="P:FtsZ-dependent cytokinesis"/>
    <property type="evidence" value="ECO:0007669"/>
    <property type="project" value="UniProtKB-UniRule"/>
</dbReference>
<dbReference type="Gene3D" id="3.30.110.150">
    <property type="entry name" value="SepF-like protein"/>
    <property type="match status" value="1"/>
</dbReference>
<dbReference type="HAMAP" id="MF_01197">
    <property type="entry name" value="SepF"/>
    <property type="match status" value="1"/>
</dbReference>
<dbReference type="InterPro" id="IPR023052">
    <property type="entry name" value="Cell_div_SepF"/>
</dbReference>
<dbReference type="InterPro" id="IPR007561">
    <property type="entry name" value="Cell_div_SepF/SepF-rel"/>
</dbReference>
<dbReference type="InterPro" id="IPR038594">
    <property type="entry name" value="SepF-like_sf"/>
</dbReference>
<dbReference type="PANTHER" id="PTHR35798">
    <property type="entry name" value="CELL DIVISION PROTEIN SEPF"/>
    <property type="match status" value="1"/>
</dbReference>
<dbReference type="PANTHER" id="PTHR35798:SF1">
    <property type="entry name" value="CELL DIVISION PROTEIN SEPF"/>
    <property type="match status" value="1"/>
</dbReference>
<dbReference type="Pfam" id="PF04472">
    <property type="entry name" value="SepF"/>
    <property type="match status" value="1"/>
</dbReference>
<organism>
    <name type="scientific">Prochlorococcus marinus (strain NATL1A)</name>
    <dbReference type="NCBI Taxonomy" id="167555"/>
    <lineage>
        <taxon>Bacteria</taxon>
        <taxon>Bacillati</taxon>
        <taxon>Cyanobacteriota</taxon>
        <taxon>Cyanophyceae</taxon>
        <taxon>Synechococcales</taxon>
        <taxon>Prochlorococcaceae</taxon>
        <taxon>Prochlorococcus</taxon>
    </lineage>
</organism>
<proteinExistence type="inferred from homology"/>
<reference key="1">
    <citation type="journal article" date="2007" name="PLoS Genet.">
        <title>Patterns and implications of gene gain and loss in the evolution of Prochlorococcus.</title>
        <authorList>
            <person name="Kettler G.C."/>
            <person name="Martiny A.C."/>
            <person name="Huang K."/>
            <person name="Zucker J."/>
            <person name="Coleman M.L."/>
            <person name="Rodrigue S."/>
            <person name="Chen F."/>
            <person name="Lapidus A."/>
            <person name="Ferriera S."/>
            <person name="Johnson J."/>
            <person name="Steglich C."/>
            <person name="Church G.M."/>
            <person name="Richardson P."/>
            <person name="Chisholm S.W."/>
        </authorList>
    </citation>
    <scope>NUCLEOTIDE SEQUENCE [LARGE SCALE GENOMIC DNA]</scope>
    <source>
        <strain>NATL1A</strain>
    </source>
</reference>
<name>SEPF_PROM1</name>